<name>RSMC_SALPK</name>
<sequence>MSAFTPASEVLLRHSDDFEQSRILFAGDLQDDLPARFECAASRAYTQQFHHWQALSRQMGDNVRFSLVAQASDVADCDTLIYYWPKNKPEAQFQLMNILSLMSVGSDVFVVGENRSGVRSAEPMLADYAPLNKVDSARRCGLYHGRLEKQPQFSLESWWAEYNIDGLTIKTLPGVFSRDGLDVGSQLLLSTLTPHTKGKVLDVGCGAGVLSAALASHSPKVRLTLCDVSAPAVEASRATLAANGLEGEVFASNVFSEVKGRFDMIISNPPFHDGMQTSLDAAQTLIRGAVRHLNSGGELRIVANAFLPYPKILDETFGFHEVIAQTGRFKVYRTVMTRQAKK</sequence>
<evidence type="ECO:0000255" key="1">
    <source>
        <dbReference type="HAMAP-Rule" id="MF_01862"/>
    </source>
</evidence>
<protein>
    <recommendedName>
        <fullName evidence="1">Ribosomal RNA small subunit methyltransferase C</fullName>
        <ecNumber evidence="1">2.1.1.172</ecNumber>
    </recommendedName>
    <alternativeName>
        <fullName evidence="1">16S rRNA m2G1207 methyltransferase</fullName>
    </alternativeName>
    <alternativeName>
        <fullName evidence="1">rRNA (guanine-N(2)-)-methyltransferase RsmC</fullName>
    </alternativeName>
</protein>
<reference key="1">
    <citation type="journal article" date="2009" name="BMC Genomics">
        <title>Pseudogene accumulation in the evolutionary histories of Salmonella enterica serovars Paratyphi A and Typhi.</title>
        <authorList>
            <person name="Holt K.E."/>
            <person name="Thomson N.R."/>
            <person name="Wain J."/>
            <person name="Langridge G.C."/>
            <person name="Hasan R."/>
            <person name="Bhutta Z.A."/>
            <person name="Quail M.A."/>
            <person name="Norbertczak H."/>
            <person name="Walker D."/>
            <person name="Simmonds M."/>
            <person name="White B."/>
            <person name="Bason N."/>
            <person name="Mungall K."/>
            <person name="Dougan G."/>
            <person name="Parkhill J."/>
        </authorList>
    </citation>
    <scope>NUCLEOTIDE SEQUENCE [LARGE SCALE GENOMIC DNA]</scope>
    <source>
        <strain>AKU_12601</strain>
    </source>
</reference>
<accession>B5BL07</accession>
<comment type="function">
    <text evidence="1">Specifically methylates the guanine in position 1207 of 16S rRNA in the 30S particle.</text>
</comment>
<comment type="catalytic activity">
    <reaction evidence="1">
        <text>guanosine(1207) in 16S rRNA + S-adenosyl-L-methionine = N(2)-methylguanosine(1207) in 16S rRNA + S-adenosyl-L-homocysteine + H(+)</text>
        <dbReference type="Rhea" id="RHEA:42736"/>
        <dbReference type="Rhea" id="RHEA-COMP:10213"/>
        <dbReference type="Rhea" id="RHEA-COMP:10214"/>
        <dbReference type="ChEBI" id="CHEBI:15378"/>
        <dbReference type="ChEBI" id="CHEBI:57856"/>
        <dbReference type="ChEBI" id="CHEBI:59789"/>
        <dbReference type="ChEBI" id="CHEBI:74269"/>
        <dbReference type="ChEBI" id="CHEBI:74481"/>
        <dbReference type="EC" id="2.1.1.172"/>
    </reaction>
</comment>
<comment type="subunit">
    <text evidence="1">Monomer.</text>
</comment>
<comment type="subcellular location">
    <subcellularLocation>
        <location evidence="1">Cytoplasm</location>
    </subcellularLocation>
</comment>
<comment type="similarity">
    <text evidence="1">Belongs to the methyltransferase superfamily. RsmC family.</text>
</comment>
<proteinExistence type="inferred from homology"/>
<keyword id="KW-0963">Cytoplasm</keyword>
<keyword id="KW-0489">Methyltransferase</keyword>
<keyword id="KW-0698">rRNA processing</keyword>
<keyword id="KW-0949">S-adenosyl-L-methionine</keyword>
<keyword id="KW-0808">Transferase</keyword>
<organism>
    <name type="scientific">Salmonella paratyphi A (strain AKU_12601)</name>
    <dbReference type="NCBI Taxonomy" id="554290"/>
    <lineage>
        <taxon>Bacteria</taxon>
        <taxon>Pseudomonadati</taxon>
        <taxon>Pseudomonadota</taxon>
        <taxon>Gammaproteobacteria</taxon>
        <taxon>Enterobacterales</taxon>
        <taxon>Enterobacteriaceae</taxon>
        <taxon>Salmonella</taxon>
    </lineage>
</organism>
<gene>
    <name evidence="1" type="primary">rsmC</name>
    <name type="ordered locus">SSPA4056</name>
</gene>
<feature type="chain" id="PRO_0000369760" description="Ribosomal RNA small subunit methyltransferase C">
    <location>
        <begin position="1"/>
        <end position="342"/>
    </location>
</feature>
<dbReference type="EC" id="2.1.1.172" evidence="1"/>
<dbReference type="EMBL" id="FM200053">
    <property type="protein sequence ID" value="CAR62353.1"/>
    <property type="molecule type" value="Genomic_DNA"/>
</dbReference>
<dbReference type="RefSeq" id="WP_001272294.1">
    <property type="nucleotide sequence ID" value="NC_011147.1"/>
</dbReference>
<dbReference type="SMR" id="B5BL07"/>
<dbReference type="KEGG" id="sek:SSPA4056"/>
<dbReference type="HOGENOM" id="CLU_049581_0_1_6"/>
<dbReference type="Proteomes" id="UP000001869">
    <property type="component" value="Chromosome"/>
</dbReference>
<dbReference type="GO" id="GO:0005737">
    <property type="term" value="C:cytoplasm"/>
    <property type="evidence" value="ECO:0007669"/>
    <property type="project" value="UniProtKB-SubCell"/>
</dbReference>
<dbReference type="GO" id="GO:0052914">
    <property type="term" value="F:16S rRNA (guanine(1207)-N(2))-methyltransferase activity"/>
    <property type="evidence" value="ECO:0007669"/>
    <property type="project" value="UniProtKB-EC"/>
</dbReference>
<dbReference type="GO" id="GO:0003676">
    <property type="term" value="F:nucleic acid binding"/>
    <property type="evidence" value="ECO:0007669"/>
    <property type="project" value="InterPro"/>
</dbReference>
<dbReference type="CDD" id="cd02440">
    <property type="entry name" value="AdoMet_MTases"/>
    <property type="match status" value="1"/>
</dbReference>
<dbReference type="FunFam" id="3.40.50.150:FF:000058">
    <property type="entry name" value="Ribosomal RNA small subunit methyltransferase C"/>
    <property type="match status" value="1"/>
</dbReference>
<dbReference type="Gene3D" id="3.40.50.150">
    <property type="entry name" value="Vaccinia Virus protein VP39"/>
    <property type="match status" value="2"/>
</dbReference>
<dbReference type="HAMAP" id="MF_01862">
    <property type="entry name" value="16SrRNA_methyltr_C"/>
    <property type="match status" value="1"/>
</dbReference>
<dbReference type="InterPro" id="IPR002052">
    <property type="entry name" value="DNA_methylase_N6_adenine_CS"/>
</dbReference>
<dbReference type="InterPro" id="IPR013675">
    <property type="entry name" value="Mtase_sm_N"/>
</dbReference>
<dbReference type="InterPro" id="IPR023543">
    <property type="entry name" value="rRNA_ssu_MeTfrase_C"/>
</dbReference>
<dbReference type="InterPro" id="IPR046977">
    <property type="entry name" value="RsmC/RlmG"/>
</dbReference>
<dbReference type="InterPro" id="IPR029063">
    <property type="entry name" value="SAM-dependent_MTases_sf"/>
</dbReference>
<dbReference type="InterPro" id="IPR007848">
    <property type="entry name" value="Small_mtfrase_dom"/>
</dbReference>
<dbReference type="NCBIfam" id="NF007023">
    <property type="entry name" value="PRK09489.1"/>
    <property type="match status" value="1"/>
</dbReference>
<dbReference type="PANTHER" id="PTHR47816">
    <property type="entry name" value="RIBOSOMAL RNA SMALL SUBUNIT METHYLTRANSFERASE C"/>
    <property type="match status" value="1"/>
</dbReference>
<dbReference type="PANTHER" id="PTHR47816:SF4">
    <property type="entry name" value="RIBOSOMAL RNA SMALL SUBUNIT METHYLTRANSFERASE C"/>
    <property type="match status" value="1"/>
</dbReference>
<dbReference type="Pfam" id="PF05175">
    <property type="entry name" value="MTS"/>
    <property type="match status" value="1"/>
</dbReference>
<dbReference type="Pfam" id="PF08468">
    <property type="entry name" value="MTS_N"/>
    <property type="match status" value="1"/>
</dbReference>
<dbReference type="SUPFAM" id="SSF53335">
    <property type="entry name" value="S-adenosyl-L-methionine-dependent methyltransferases"/>
    <property type="match status" value="1"/>
</dbReference>